<proteinExistence type="inferred from homology"/>
<dbReference type="EC" id="2.4.1.227" evidence="1"/>
<dbReference type="EMBL" id="AM263198">
    <property type="protein sequence ID" value="CAK21467.1"/>
    <property type="molecule type" value="Genomic_DNA"/>
</dbReference>
<dbReference type="RefSeq" id="WP_011702812.1">
    <property type="nucleotide sequence ID" value="NC_008555.1"/>
</dbReference>
<dbReference type="SMR" id="A0AKD5"/>
<dbReference type="STRING" id="386043.lwe2049"/>
<dbReference type="CAZy" id="GT28">
    <property type="family name" value="Glycosyltransferase Family 28"/>
</dbReference>
<dbReference type="GeneID" id="61189949"/>
<dbReference type="KEGG" id="lwe:lwe2049"/>
<dbReference type="eggNOG" id="COG0707">
    <property type="taxonomic scope" value="Bacteria"/>
</dbReference>
<dbReference type="HOGENOM" id="CLU_037404_0_1_9"/>
<dbReference type="OrthoDB" id="9808936at2"/>
<dbReference type="UniPathway" id="UPA00219"/>
<dbReference type="Proteomes" id="UP000000779">
    <property type="component" value="Chromosome"/>
</dbReference>
<dbReference type="GO" id="GO:0005886">
    <property type="term" value="C:plasma membrane"/>
    <property type="evidence" value="ECO:0007669"/>
    <property type="project" value="UniProtKB-SubCell"/>
</dbReference>
<dbReference type="GO" id="GO:0051991">
    <property type="term" value="F:UDP-N-acetyl-D-glucosamine:N-acetylmuramoyl-L-alanyl-D-glutamyl-meso-2,6-diaminopimelyl-D-alanyl-D-alanine-diphosphoundecaprenol 4-beta-N-acetylglucosaminlytransferase activity"/>
    <property type="evidence" value="ECO:0007669"/>
    <property type="project" value="RHEA"/>
</dbReference>
<dbReference type="GO" id="GO:0050511">
    <property type="term" value="F:undecaprenyldiphospho-muramoylpentapeptide beta-N-acetylglucosaminyltransferase activity"/>
    <property type="evidence" value="ECO:0007669"/>
    <property type="project" value="UniProtKB-UniRule"/>
</dbReference>
<dbReference type="GO" id="GO:0005975">
    <property type="term" value="P:carbohydrate metabolic process"/>
    <property type="evidence" value="ECO:0007669"/>
    <property type="project" value="InterPro"/>
</dbReference>
<dbReference type="GO" id="GO:0051301">
    <property type="term" value="P:cell division"/>
    <property type="evidence" value="ECO:0007669"/>
    <property type="project" value="UniProtKB-KW"/>
</dbReference>
<dbReference type="GO" id="GO:0071555">
    <property type="term" value="P:cell wall organization"/>
    <property type="evidence" value="ECO:0007669"/>
    <property type="project" value="UniProtKB-KW"/>
</dbReference>
<dbReference type="GO" id="GO:0030259">
    <property type="term" value="P:lipid glycosylation"/>
    <property type="evidence" value="ECO:0007669"/>
    <property type="project" value="UniProtKB-UniRule"/>
</dbReference>
<dbReference type="GO" id="GO:0009252">
    <property type="term" value="P:peptidoglycan biosynthetic process"/>
    <property type="evidence" value="ECO:0007669"/>
    <property type="project" value="UniProtKB-UniRule"/>
</dbReference>
<dbReference type="GO" id="GO:0008360">
    <property type="term" value="P:regulation of cell shape"/>
    <property type="evidence" value="ECO:0007669"/>
    <property type="project" value="UniProtKB-KW"/>
</dbReference>
<dbReference type="CDD" id="cd03785">
    <property type="entry name" value="GT28_MurG"/>
    <property type="match status" value="1"/>
</dbReference>
<dbReference type="Gene3D" id="3.40.50.2000">
    <property type="entry name" value="Glycogen Phosphorylase B"/>
    <property type="match status" value="2"/>
</dbReference>
<dbReference type="HAMAP" id="MF_00033">
    <property type="entry name" value="MurG"/>
    <property type="match status" value="1"/>
</dbReference>
<dbReference type="InterPro" id="IPR006009">
    <property type="entry name" value="GlcNAc_MurG"/>
</dbReference>
<dbReference type="InterPro" id="IPR007235">
    <property type="entry name" value="Glyco_trans_28_C"/>
</dbReference>
<dbReference type="InterPro" id="IPR004276">
    <property type="entry name" value="GlycoTrans_28_N"/>
</dbReference>
<dbReference type="NCBIfam" id="TIGR01133">
    <property type="entry name" value="murG"/>
    <property type="match status" value="1"/>
</dbReference>
<dbReference type="PANTHER" id="PTHR21015:SF22">
    <property type="entry name" value="GLYCOSYLTRANSFERASE"/>
    <property type="match status" value="1"/>
</dbReference>
<dbReference type="PANTHER" id="PTHR21015">
    <property type="entry name" value="UDP-N-ACETYLGLUCOSAMINE--N-ACETYLMURAMYL-(PENTAPEPTIDE) PYROPHOSPHORYL-UNDECAPRENOL N-ACETYLGLUCOSAMINE TRANSFERASE 1"/>
    <property type="match status" value="1"/>
</dbReference>
<dbReference type="Pfam" id="PF04101">
    <property type="entry name" value="Glyco_tran_28_C"/>
    <property type="match status" value="1"/>
</dbReference>
<dbReference type="Pfam" id="PF03033">
    <property type="entry name" value="Glyco_transf_28"/>
    <property type="match status" value="1"/>
</dbReference>
<dbReference type="SUPFAM" id="SSF53756">
    <property type="entry name" value="UDP-Glycosyltransferase/glycogen phosphorylase"/>
    <property type="match status" value="1"/>
</dbReference>
<evidence type="ECO:0000255" key="1">
    <source>
        <dbReference type="HAMAP-Rule" id="MF_00033"/>
    </source>
</evidence>
<reference key="1">
    <citation type="journal article" date="2006" name="J. Bacteriol.">
        <title>Whole-genome sequence of Listeria welshimeri reveals common steps in genome reduction with Listeria innocua as compared to Listeria monocytogenes.</title>
        <authorList>
            <person name="Hain T."/>
            <person name="Steinweg C."/>
            <person name="Kuenne C.T."/>
            <person name="Billion A."/>
            <person name="Ghai R."/>
            <person name="Chatterjee S.S."/>
            <person name="Domann E."/>
            <person name="Kaerst U."/>
            <person name="Goesmann A."/>
            <person name="Bekel T."/>
            <person name="Bartels D."/>
            <person name="Kaiser O."/>
            <person name="Meyer F."/>
            <person name="Puehler A."/>
            <person name="Weisshaar B."/>
            <person name="Wehland J."/>
            <person name="Liang C."/>
            <person name="Dandekar T."/>
            <person name="Lampidis R."/>
            <person name="Kreft J."/>
            <person name="Goebel W."/>
            <person name="Chakraborty T."/>
        </authorList>
    </citation>
    <scope>NUCLEOTIDE SEQUENCE [LARGE SCALE GENOMIC DNA]</scope>
    <source>
        <strain>ATCC 35897 / DSM 20650 / CCUG 15529 / CIP 8149 / NCTC 11857 / SLCC 5334 / V8</strain>
    </source>
</reference>
<accession>A0AKD5</accession>
<comment type="function">
    <text evidence="1">Cell wall formation. Catalyzes the transfer of a GlcNAc subunit on undecaprenyl-pyrophosphoryl-MurNAc-pentapeptide (lipid intermediate I) to form undecaprenyl-pyrophosphoryl-MurNAc-(pentapeptide)GlcNAc (lipid intermediate II).</text>
</comment>
<comment type="catalytic activity">
    <reaction evidence="1">
        <text>di-trans,octa-cis-undecaprenyl diphospho-N-acetyl-alpha-D-muramoyl-L-alanyl-D-glutamyl-meso-2,6-diaminopimeloyl-D-alanyl-D-alanine + UDP-N-acetyl-alpha-D-glucosamine = di-trans,octa-cis-undecaprenyl diphospho-[N-acetyl-alpha-D-glucosaminyl-(1-&gt;4)]-N-acetyl-alpha-D-muramoyl-L-alanyl-D-glutamyl-meso-2,6-diaminopimeloyl-D-alanyl-D-alanine + UDP + H(+)</text>
        <dbReference type="Rhea" id="RHEA:31227"/>
        <dbReference type="ChEBI" id="CHEBI:15378"/>
        <dbReference type="ChEBI" id="CHEBI:57705"/>
        <dbReference type="ChEBI" id="CHEBI:58223"/>
        <dbReference type="ChEBI" id="CHEBI:61387"/>
        <dbReference type="ChEBI" id="CHEBI:61388"/>
        <dbReference type="EC" id="2.4.1.227"/>
    </reaction>
</comment>
<comment type="pathway">
    <text evidence="1">Cell wall biogenesis; peptidoglycan biosynthesis.</text>
</comment>
<comment type="subcellular location">
    <subcellularLocation>
        <location evidence="1">Cell membrane</location>
        <topology evidence="1">Peripheral membrane protein</topology>
        <orientation evidence="1">Cytoplasmic side</orientation>
    </subcellularLocation>
</comment>
<comment type="similarity">
    <text evidence="1">Belongs to the glycosyltransferase 28 family. MurG subfamily.</text>
</comment>
<organism>
    <name type="scientific">Listeria welshimeri serovar 6b (strain ATCC 35897 / DSM 20650 / CCUG 15529 / CIP 8149 / NCTC 11857 / SLCC 5334 / V8)</name>
    <dbReference type="NCBI Taxonomy" id="386043"/>
    <lineage>
        <taxon>Bacteria</taxon>
        <taxon>Bacillati</taxon>
        <taxon>Bacillota</taxon>
        <taxon>Bacilli</taxon>
        <taxon>Bacillales</taxon>
        <taxon>Listeriaceae</taxon>
        <taxon>Listeria</taxon>
    </lineage>
</organism>
<keyword id="KW-0131">Cell cycle</keyword>
<keyword id="KW-0132">Cell division</keyword>
<keyword id="KW-1003">Cell membrane</keyword>
<keyword id="KW-0133">Cell shape</keyword>
<keyword id="KW-0961">Cell wall biogenesis/degradation</keyword>
<keyword id="KW-0328">Glycosyltransferase</keyword>
<keyword id="KW-0472">Membrane</keyword>
<keyword id="KW-0573">Peptidoglycan synthesis</keyword>
<keyword id="KW-0808">Transferase</keyword>
<name>MURG_LISW6</name>
<sequence length="363" mass="39165">MKVAISGGGTGGHVYPALAFIRELKKLHPEAEFLYIGTEKGLEADIVKREGIPFESIEITGFKRSLSLENVKTIMRFLSGAKKSKQILRDFKPDVVIGTGGYVCGPVVYAAAKLKIPTLIHEQNSVAGLTNKFLSRYTDKVAICFEEVSDSFASEKIVFTGNPRASEVVGVESEGALEAYGLESGKPTVLVFGGSRGARGVNEAVEAILPEWNKRDFQLLYVTGDVHYEKIKDTLADLNLGSHISVQPFIYDMPKILNAVTLVVSRAGATTLAELTALGVPSILIPSPYVTANHQENNARALEKNNAAIVITEAELKNTDLMATVDSILTDEEKLNAMKASAKQMGRPEAAAKLVEAVLGIMK</sequence>
<protein>
    <recommendedName>
        <fullName evidence="1">UDP-N-acetylglucosamine--N-acetylmuramyl-(pentapeptide) pyrophosphoryl-undecaprenol N-acetylglucosamine transferase</fullName>
        <ecNumber evidence="1">2.4.1.227</ecNumber>
    </recommendedName>
    <alternativeName>
        <fullName evidence="1">Undecaprenyl-PP-MurNAc-pentapeptide-UDPGlcNAc GlcNAc transferase</fullName>
    </alternativeName>
</protein>
<gene>
    <name evidence="1" type="primary">murG</name>
    <name type="ordered locus">lwe2049</name>
</gene>
<feature type="chain" id="PRO_1000002667" description="UDP-N-acetylglucosamine--N-acetylmuramyl-(pentapeptide) pyrophosphoryl-undecaprenol N-acetylglucosamine transferase">
    <location>
        <begin position="1"/>
        <end position="363"/>
    </location>
</feature>
<feature type="binding site" evidence="1">
    <location>
        <begin position="10"/>
        <end position="12"/>
    </location>
    <ligand>
        <name>UDP-N-acetyl-alpha-D-glucosamine</name>
        <dbReference type="ChEBI" id="CHEBI:57705"/>
    </ligand>
</feature>
<feature type="binding site" evidence="1">
    <location>
        <position position="124"/>
    </location>
    <ligand>
        <name>UDP-N-acetyl-alpha-D-glucosamine</name>
        <dbReference type="ChEBI" id="CHEBI:57705"/>
    </ligand>
</feature>
<feature type="binding site" evidence="1">
    <location>
        <position position="195"/>
    </location>
    <ligand>
        <name>UDP-N-acetyl-alpha-D-glucosamine</name>
        <dbReference type="ChEBI" id="CHEBI:57705"/>
    </ligand>
</feature>
<feature type="binding site" evidence="1">
    <location>
        <position position="250"/>
    </location>
    <ligand>
        <name>UDP-N-acetyl-alpha-D-glucosamine</name>
        <dbReference type="ChEBI" id="CHEBI:57705"/>
    </ligand>
</feature>
<feature type="binding site" evidence="1">
    <location>
        <position position="295"/>
    </location>
    <ligand>
        <name>UDP-N-acetyl-alpha-D-glucosamine</name>
        <dbReference type="ChEBI" id="CHEBI:57705"/>
    </ligand>
</feature>